<comment type="similarity">
    <text evidence="1">Belongs to the bacterial ribosomal protein bS16 family.</text>
</comment>
<comment type="sequence caution" evidence="2">
    <conflict type="erroneous initiation">
        <sequence resource="EMBL-CDS" id="AAN67084"/>
    </conflict>
</comment>
<gene>
    <name evidence="1" type="primary">rpsP</name>
    <name type="ordered locus">PP_1462</name>
</gene>
<evidence type="ECO:0000255" key="1">
    <source>
        <dbReference type="HAMAP-Rule" id="MF_00385"/>
    </source>
</evidence>
<evidence type="ECO:0000305" key="2"/>
<keyword id="KW-1185">Reference proteome</keyword>
<keyword id="KW-0687">Ribonucleoprotein</keyword>
<keyword id="KW-0689">Ribosomal protein</keyword>
<organism>
    <name type="scientific">Pseudomonas putida (strain ATCC 47054 / DSM 6125 / CFBP 8728 / NCIMB 11950 / KT2440)</name>
    <dbReference type="NCBI Taxonomy" id="160488"/>
    <lineage>
        <taxon>Bacteria</taxon>
        <taxon>Pseudomonadati</taxon>
        <taxon>Pseudomonadota</taxon>
        <taxon>Gammaproteobacteria</taxon>
        <taxon>Pseudomonadales</taxon>
        <taxon>Pseudomonadaceae</taxon>
        <taxon>Pseudomonas</taxon>
    </lineage>
</organism>
<accession>Q88MV6</accession>
<protein>
    <recommendedName>
        <fullName evidence="1">Small ribosomal subunit protein bS16</fullName>
    </recommendedName>
    <alternativeName>
        <fullName evidence="2">30S ribosomal protein S16</fullName>
    </alternativeName>
</protein>
<name>RS16_PSEPK</name>
<proteinExistence type="inferred from homology"/>
<sequence>MVTIRLARGGSKKRPFYHLTVTNSRNARDGRFVERVGFFNPIAAGAEVKLSVNQERVTYWLSQGAQPSERVAQLLKEAAKAAA</sequence>
<dbReference type="EMBL" id="AE015451">
    <property type="protein sequence ID" value="AAN67084.1"/>
    <property type="status" value="ALT_INIT"/>
    <property type="molecule type" value="Genomic_DNA"/>
</dbReference>
<dbReference type="RefSeq" id="NP_743620.3">
    <property type="nucleotide sequence ID" value="NC_002947.4"/>
</dbReference>
<dbReference type="RefSeq" id="WP_003252142.1">
    <property type="nucleotide sequence ID" value="NZ_CP169744.1"/>
</dbReference>
<dbReference type="SMR" id="Q88MV6"/>
<dbReference type="STRING" id="160488.PP_1462"/>
<dbReference type="PaxDb" id="160488-PP_1462"/>
<dbReference type="GeneID" id="83682003"/>
<dbReference type="KEGG" id="ppu:PP_1462"/>
<dbReference type="PATRIC" id="fig|160488.4.peg.1552"/>
<dbReference type="eggNOG" id="COG0228">
    <property type="taxonomic scope" value="Bacteria"/>
</dbReference>
<dbReference type="HOGENOM" id="CLU_100590_5_1_6"/>
<dbReference type="OrthoDB" id="9807878at2"/>
<dbReference type="PhylomeDB" id="Q88MV6"/>
<dbReference type="Proteomes" id="UP000000556">
    <property type="component" value="Chromosome"/>
</dbReference>
<dbReference type="GO" id="GO:0005737">
    <property type="term" value="C:cytoplasm"/>
    <property type="evidence" value="ECO:0007669"/>
    <property type="project" value="UniProtKB-ARBA"/>
</dbReference>
<dbReference type="GO" id="GO:0015935">
    <property type="term" value="C:small ribosomal subunit"/>
    <property type="evidence" value="ECO:0007669"/>
    <property type="project" value="TreeGrafter"/>
</dbReference>
<dbReference type="GO" id="GO:0003735">
    <property type="term" value="F:structural constituent of ribosome"/>
    <property type="evidence" value="ECO:0007669"/>
    <property type="project" value="InterPro"/>
</dbReference>
<dbReference type="GO" id="GO:0006412">
    <property type="term" value="P:translation"/>
    <property type="evidence" value="ECO:0007669"/>
    <property type="project" value="UniProtKB-UniRule"/>
</dbReference>
<dbReference type="FunFam" id="3.30.1320.10:FF:000001">
    <property type="entry name" value="30S ribosomal protein S16"/>
    <property type="match status" value="1"/>
</dbReference>
<dbReference type="Gene3D" id="3.30.1320.10">
    <property type="match status" value="1"/>
</dbReference>
<dbReference type="HAMAP" id="MF_00385">
    <property type="entry name" value="Ribosomal_bS16"/>
    <property type="match status" value="1"/>
</dbReference>
<dbReference type="InterPro" id="IPR000307">
    <property type="entry name" value="Ribosomal_bS16"/>
</dbReference>
<dbReference type="InterPro" id="IPR023803">
    <property type="entry name" value="Ribosomal_bS16_dom_sf"/>
</dbReference>
<dbReference type="NCBIfam" id="TIGR00002">
    <property type="entry name" value="S16"/>
    <property type="match status" value="1"/>
</dbReference>
<dbReference type="PANTHER" id="PTHR12919">
    <property type="entry name" value="30S RIBOSOMAL PROTEIN S16"/>
    <property type="match status" value="1"/>
</dbReference>
<dbReference type="PANTHER" id="PTHR12919:SF20">
    <property type="entry name" value="SMALL RIBOSOMAL SUBUNIT PROTEIN BS16M"/>
    <property type="match status" value="1"/>
</dbReference>
<dbReference type="Pfam" id="PF00886">
    <property type="entry name" value="Ribosomal_S16"/>
    <property type="match status" value="1"/>
</dbReference>
<dbReference type="SUPFAM" id="SSF54565">
    <property type="entry name" value="Ribosomal protein S16"/>
    <property type="match status" value="1"/>
</dbReference>
<feature type="chain" id="PRO_0000167227" description="Small ribosomal subunit protein bS16">
    <location>
        <begin position="1"/>
        <end position="83"/>
    </location>
</feature>
<reference key="1">
    <citation type="journal article" date="2002" name="Environ. Microbiol.">
        <title>Complete genome sequence and comparative analysis of the metabolically versatile Pseudomonas putida KT2440.</title>
        <authorList>
            <person name="Nelson K.E."/>
            <person name="Weinel C."/>
            <person name="Paulsen I.T."/>
            <person name="Dodson R.J."/>
            <person name="Hilbert H."/>
            <person name="Martins dos Santos V.A.P."/>
            <person name="Fouts D.E."/>
            <person name="Gill S.R."/>
            <person name="Pop M."/>
            <person name="Holmes M."/>
            <person name="Brinkac L.M."/>
            <person name="Beanan M.J."/>
            <person name="DeBoy R.T."/>
            <person name="Daugherty S.C."/>
            <person name="Kolonay J.F."/>
            <person name="Madupu R."/>
            <person name="Nelson W.C."/>
            <person name="White O."/>
            <person name="Peterson J.D."/>
            <person name="Khouri H.M."/>
            <person name="Hance I."/>
            <person name="Chris Lee P."/>
            <person name="Holtzapple E.K."/>
            <person name="Scanlan D."/>
            <person name="Tran K."/>
            <person name="Moazzez A."/>
            <person name="Utterback T.R."/>
            <person name="Rizzo M."/>
            <person name="Lee K."/>
            <person name="Kosack D."/>
            <person name="Moestl D."/>
            <person name="Wedler H."/>
            <person name="Lauber J."/>
            <person name="Stjepandic D."/>
            <person name="Hoheisel J."/>
            <person name="Straetz M."/>
            <person name="Heim S."/>
            <person name="Kiewitz C."/>
            <person name="Eisen J.A."/>
            <person name="Timmis K.N."/>
            <person name="Duesterhoeft A."/>
            <person name="Tuemmler B."/>
            <person name="Fraser C.M."/>
        </authorList>
    </citation>
    <scope>NUCLEOTIDE SEQUENCE [LARGE SCALE GENOMIC DNA]</scope>
    <source>
        <strain>ATCC 47054 / DSM 6125 / CFBP 8728 / NCIMB 11950 / KT2440</strain>
    </source>
</reference>